<protein>
    <recommendedName>
        <fullName>Uncharacterized protein YlcI</fullName>
    </recommendedName>
</protein>
<gene>
    <name type="primary">ylcI</name>
    <name type="ordered locus">b4589</name>
</gene>
<organism>
    <name type="scientific">Escherichia coli (strain K12)</name>
    <dbReference type="NCBI Taxonomy" id="83333"/>
    <lineage>
        <taxon>Bacteria</taxon>
        <taxon>Pseudomonadati</taxon>
        <taxon>Pseudomonadota</taxon>
        <taxon>Gammaproteobacteria</taxon>
        <taxon>Enterobacterales</taxon>
        <taxon>Enterobacteriaceae</taxon>
        <taxon>Escherichia</taxon>
    </lineage>
</organism>
<accession>A5A607</accession>
<accession>P77085</accession>
<keyword id="KW-1185">Reference proteome</keyword>
<proteinExistence type="predicted"/>
<dbReference type="EMBL" id="U82598">
    <property type="protein sequence ID" value="AAB40755.1"/>
    <property type="molecule type" value="Genomic_DNA"/>
</dbReference>
<dbReference type="EMBL" id="U00096">
    <property type="protein sequence ID" value="ABP93436.1"/>
    <property type="molecule type" value="Genomic_DNA"/>
</dbReference>
<dbReference type="RefSeq" id="WP_001421937.1">
    <property type="nucleotide sequence ID" value="NZ_LN832404.1"/>
</dbReference>
<dbReference type="RefSeq" id="YP_001165309.1">
    <property type="nucleotide sequence ID" value="NC_000913.3"/>
</dbReference>
<dbReference type="SMR" id="A5A607"/>
<dbReference type="jPOST" id="A5A607"/>
<dbReference type="PaxDb" id="511145-b4589"/>
<dbReference type="EnsemblBacteria" id="ABP93436">
    <property type="protein sequence ID" value="ABP93436"/>
    <property type="gene ID" value="b4589"/>
</dbReference>
<dbReference type="GeneID" id="5061499"/>
<dbReference type="KEGG" id="eco:b4589"/>
<dbReference type="KEGG" id="ecoc:C3026_02770"/>
<dbReference type="PATRIC" id="fig|511145.12.peg.583"/>
<dbReference type="eggNOG" id="ENOG5033AKV">
    <property type="taxonomic scope" value="Bacteria"/>
</dbReference>
<dbReference type="InParanoid" id="A5A607"/>
<dbReference type="OMA" id="CREKALN"/>
<dbReference type="OrthoDB" id="6419848at2"/>
<dbReference type="PhylomeDB" id="A5A607"/>
<dbReference type="BioCyc" id="EcoCyc:MONOMER0-2814"/>
<dbReference type="PRO" id="PR:A5A607"/>
<dbReference type="Proteomes" id="UP000000625">
    <property type="component" value="Chromosome"/>
</dbReference>
<dbReference type="InterPro" id="IPR025030">
    <property type="entry name" value="DUF3950"/>
</dbReference>
<dbReference type="NCBIfam" id="NF041551">
    <property type="entry name" value="YlcI_YnfO_N"/>
    <property type="match status" value="1"/>
</dbReference>
<dbReference type="Pfam" id="PF13132">
    <property type="entry name" value="DUF3950"/>
    <property type="match status" value="1"/>
</dbReference>
<name>YLCI_ECOLI</name>
<feature type="chain" id="PRO_0000311775" description="Uncharacterized protein YlcI">
    <location>
        <begin position="1"/>
        <end position="64"/>
    </location>
</feature>
<sequence length="64" mass="7521">MSTKNRTRRTTTRNIRFPNQMIEQINIALEQKGSGNFSAWVIEACRRRLTSEKRAYTSIKSDEE</sequence>
<reference key="1">
    <citation type="submission" date="1996-12" db="EMBL/GenBank/DDBJ databases">
        <title>Sequence of minutes 4-25 of Escherichia coli.</title>
        <authorList>
            <person name="Chung E."/>
            <person name="Allen E."/>
            <person name="Araujo R."/>
            <person name="Aparicio A."/>
            <person name="Davis K."/>
            <person name="Duncan M."/>
            <person name="Federspiel N."/>
            <person name="Hyman R."/>
            <person name="Kalman S."/>
            <person name="Komp C."/>
            <person name="Kurdi O."/>
            <person name="Lew H."/>
            <person name="Lin D."/>
            <person name="Namath A."/>
            <person name="Oefner P."/>
            <person name="Roberts D."/>
            <person name="Schramm S."/>
            <person name="Davis R.W."/>
        </authorList>
    </citation>
    <scope>NUCLEOTIDE SEQUENCE [LARGE SCALE GENOMIC DNA]</scope>
    <source>
        <strain>K12 / MG1655 / ATCC 47076</strain>
    </source>
</reference>
<reference key="2">
    <citation type="journal article" date="1997" name="Science">
        <title>The complete genome sequence of Escherichia coli K-12.</title>
        <authorList>
            <person name="Blattner F.R."/>
            <person name="Plunkett G. III"/>
            <person name="Bloch C.A."/>
            <person name="Perna N.T."/>
            <person name="Burland V."/>
            <person name="Riley M."/>
            <person name="Collado-Vides J."/>
            <person name="Glasner J.D."/>
            <person name="Rode C.K."/>
            <person name="Mayhew G.F."/>
            <person name="Gregor J."/>
            <person name="Davis N.W."/>
            <person name="Kirkpatrick H.A."/>
            <person name="Goeden M.A."/>
            <person name="Rose D.J."/>
            <person name="Mau B."/>
            <person name="Shao Y."/>
        </authorList>
    </citation>
    <scope>NUCLEOTIDE SEQUENCE [LARGE SCALE GENOMIC DNA]</scope>
    <source>
        <strain>K12 / MG1655 / ATCC 47076</strain>
    </source>
</reference>